<keyword id="KW-0067">ATP-binding</keyword>
<keyword id="KW-0963">Cytoplasm</keyword>
<keyword id="KW-0903">Direct protein sequencing</keyword>
<keyword id="KW-0325">Glycoprotein</keyword>
<keyword id="KW-0547">Nucleotide-binding</keyword>
<keyword id="KW-0539">Nucleus</keyword>
<keyword id="KW-1185">Reference proteome</keyword>
<keyword id="KW-0346">Stress response</keyword>
<dbReference type="EMBL" id="L01500">
    <property type="protein sequence ID" value="AAB59186.1"/>
    <property type="molecule type" value="Genomic_DNA"/>
</dbReference>
<dbReference type="EMBL" id="M36114">
    <property type="protein sequence ID" value="AAA28627.1"/>
    <property type="molecule type" value="Genomic_DNA"/>
</dbReference>
<dbReference type="EMBL" id="AE014297">
    <property type="protein sequence ID" value="AAF55150.1"/>
    <property type="molecule type" value="Genomic_DNA"/>
</dbReference>
<dbReference type="EMBL" id="AE014297">
    <property type="protein sequence ID" value="AAN13637.1"/>
    <property type="molecule type" value="Genomic_DNA"/>
</dbReference>
<dbReference type="EMBL" id="AE014297">
    <property type="protein sequence ID" value="AAN13638.1"/>
    <property type="molecule type" value="Genomic_DNA"/>
</dbReference>
<dbReference type="EMBL" id="AE014297">
    <property type="protein sequence ID" value="AAN13639.1"/>
    <property type="molecule type" value="Genomic_DNA"/>
</dbReference>
<dbReference type="EMBL" id="AE014297">
    <property type="protein sequence ID" value="AAO41567.1"/>
    <property type="molecule type" value="Genomic_DNA"/>
</dbReference>
<dbReference type="EMBL" id="AE014297">
    <property type="protein sequence ID" value="AAO41568.1"/>
    <property type="molecule type" value="Genomic_DNA"/>
</dbReference>
<dbReference type="EMBL" id="AY084193">
    <property type="protein sequence ID" value="AAL89931.1"/>
    <property type="molecule type" value="mRNA"/>
</dbReference>
<dbReference type="EMBL" id="BT023894">
    <property type="protein sequence ID" value="ABA81828.1"/>
    <property type="molecule type" value="mRNA"/>
</dbReference>
<dbReference type="EMBL" id="J02569">
    <property type="protein sequence ID" value="AAA28631.1"/>
    <property type="status" value="ALT_SEQ"/>
    <property type="molecule type" value="Genomic_DNA"/>
</dbReference>
<dbReference type="PIR" id="A36333">
    <property type="entry name" value="A36333"/>
</dbReference>
<dbReference type="RefSeq" id="NP_001262586.1">
    <property type="nucleotide sequence ID" value="NM_001275657.1"/>
</dbReference>
<dbReference type="RefSeq" id="NP_524356.1">
    <property type="nucleotide sequence ID" value="NM_079632.6"/>
</dbReference>
<dbReference type="RefSeq" id="NP_731987.1">
    <property type="nucleotide sequence ID" value="NM_169625.2"/>
</dbReference>
<dbReference type="RefSeq" id="NP_731988.1">
    <property type="nucleotide sequence ID" value="NM_169626.2"/>
</dbReference>
<dbReference type="RefSeq" id="NP_731989.1">
    <property type="nucleotide sequence ID" value="NM_169627.2"/>
</dbReference>
<dbReference type="RefSeq" id="NP_788679.1">
    <property type="nucleotide sequence ID" value="NM_176502.2"/>
</dbReference>
<dbReference type="RefSeq" id="NP_788680.1">
    <property type="nucleotide sequence ID" value="NM_176503.2"/>
</dbReference>
<dbReference type="SMR" id="P11147"/>
<dbReference type="BioGRID" id="66904">
    <property type="interactions" value="93"/>
</dbReference>
<dbReference type="DIP" id="DIP-19158N"/>
<dbReference type="FunCoup" id="P11147">
    <property type="interactions" value="1369"/>
</dbReference>
<dbReference type="IntAct" id="P11147">
    <property type="interactions" value="13"/>
</dbReference>
<dbReference type="MINT" id="P11147"/>
<dbReference type="STRING" id="7227.FBpp0082516"/>
<dbReference type="GlyCosmos" id="P11147">
    <property type="glycosylation" value="1 site, No reported glycans"/>
</dbReference>
<dbReference type="GlyGen" id="P11147">
    <property type="glycosylation" value="3 sites, 1 O-linked glycan (1 site)"/>
</dbReference>
<dbReference type="iPTMnet" id="P11147"/>
<dbReference type="PaxDb" id="7227-FBpp0082516"/>
<dbReference type="DNASU" id="41840"/>
<dbReference type="EnsemblMetazoa" id="FBtr0083055">
    <property type="protein sequence ID" value="FBpp0082514"/>
    <property type="gene ID" value="FBgn0266599"/>
</dbReference>
<dbReference type="EnsemblMetazoa" id="FBtr0083056">
    <property type="protein sequence ID" value="FBpp0082515"/>
    <property type="gene ID" value="FBgn0266599"/>
</dbReference>
<dbReference type="EnsemblMetazoa" id="FBtr0083057">
    <property type="protein sequence ID" value="FBpp0082516"/>
    <property type="gene ID" value="FBgn0266599"/>
</dbReference>
<dbReference type="EnsemblMetazoa" id="FBtr0083058">
    <property type="protein sequence ID" value="FBpp0082517"/>
    <property type="gene ID" value="FBgn0266599"/>
</dbReference>
<dbReference type="EnsemblMetazoa" id="FBtr0083059">
    <property type="protein sequence ID" value="FBpp0082518"/>
    <property type="gene ID" value="FBgn0266599"/>
</dbReference>
<dbReference type="EnsemblMetazoa" id="FBtr0083060">
    <property type="protein sequence ID" value="FBpp0082519"/>
    <property type="gene ID" value="FBgn0266599"/>
</dbReference>
<dbReference type="EnsemblMetazoa" id="FBtr0337053">
    <property type="protein sequence ID" value="FBpp0307982"/>
    <property type="gene ID" value="FBgn0266599"/>
</dbReference>
<dbReference type="GeneID" id="41840"/>
<dbReference type="KEGG" id="dme:Dmel_CG4264"/>
<dbReference type="AGR" id="FB:FBgn0266599"/>
<dbReference type="CTD" id="41840"/>
<dbReference type="FlyBase" id="FBgn0266599">
    <property type="gene designation" value="Hsc70-4"/>
</dbReference>
<dbReference type="VEuPathDB" id="VectorBase:FBgn0266599"/>
<dbReference type="eggNOG" id="KOG0101">
    <property type="taxonomic scope" value="Eukaryota"/>
</dbReference>
<dbReference type="GeneTree" id="ENSGT00940000154813"/>
<dbReference type="HOGENOM" id="CLU_005965_3_0_1"/>
<dbReference type="InParanoid" id="P11147"/>
<dbReference type="OMA" id="AYTKNQD"/>
<dbReference type="OrthoDB" id="2401965at2759"/>
<dbReference type="PhylomeDB" id="P11147"/>
<dbReference type="Reactome" id="R-DME-3371497">
    <property type="pathway name" value="HSP90 chaperone cycle for steroid hormone receptors (SHR) in the presence of ligand"/>
</dbReference>
<dbReference type="Reactome" id="R-DME-3371571">
    <property type="pathway name" value="HSF1-dependent transactivation"/>
</dbReference>
<dbReference type="Reactome" id="R-DME-6798695">
    <property type="pathway name" value="Neutrophil degranulation"/>
</dbReference>
<dbReference type="Reactome" id="R-DME-72163">
    <property type="pathway name" value="mRNA Splicing - Major Pathway"/>
</dbReference>
<dbReference type="Reactome" id="R-DME-8856828">
    <property type="pathway name" value="Clathrin-mediated endocytosis"/>
</dbReference>
<dbReference type="Reactome" id="R-DME-888590">
    <property type="pathway name" value="GABA synthesis, release, reuptake and degradation"/>
</dbReference>
<dbReference type="SignaLink" id="P11147"/>
<dbReference type="BioGRID-ORCS" id="41840">
    <property type="hits" value="1 hit in 3 CRISPR screens"/>
</dbReference>
<dbReference type="ChiTaRS" id="Hsc70-4">
    <property type="organism name" value="fly"/>
</dbReference>
<dbReference type="GenomeRNAi" id="41840"/>
<dbReference type="PRO" id="PR:P11147"/>
<dbReference type="Proteomes" id="UP000000803">
    <property type="component" value="Chromosome 3R"/>
</dbReference>
<dbReference type="Bgee" id="FBgn0266599">
    <property type="expression patterns" value="Expressed in wing disc and 288 other cell types or tissues"/>
</dbReference>
<dbReference type="ExpressionAtlas" id="P11147">
    <property type="expression patterns" value="baseline and differential"/>
</dbReference>
<dbReference type="GO" id="GO:0071013">
    <property type="term" value="C:catalytic step 2 spliceosome"/>
    <property type="evidence" value="ECO:0007005"/>
    <property type="project" value="FlyBase"/>
</dbReference>
<dbReference type="GO" id="GO:0005737">
    <property type="term" value="C:cytoplasm"/>
    <property type="evidence" value="ECO:0000318"/>
    <property type="project" value="GO_Central"/>
</dbReference>
<dbReference type="GO" id="GO:0005829">
    <property type="term" value="C:cytosol"/>
    <property type="evidence" value="ECO:0007005"/>
    <property type="project" value="FlyBase"/>
</dbReference>
<dbReference type="GO" id="GO:0005634">
    <property type="term" value="C:nucleus"/>
    <property type="evidence" value="ECO:0007005"/>
    <property type="project" value="FlyBase"/>
</dbReference>
<dbReference type="GO" id="GO:0048471">
    <property type="term" value="C:perinuclear region of cytoplasm"/>
    <property type="evidence" value="ECO:0007669"/>
    <property type="project" value="UniProtKB-SubCell"/>
</dbReference>
<dbReference type="GO" id="GO:0005886">
    <property type="term" value="C:plasma membrane"/>
    <property type="evidence" value="ECO:0000318"/>
    <property type="project" value="GO_Central"/>
</dbReference>
<dbReference type="GO" id="GO:0071011">
    <property type="term" value="C:precatalytic spliceosome"/>
    <property type="evidence" value="ECO:0007005"/>
    <property type="project" value="FlyBase"/>
</dbReference>
<dbReference type="GO" id="GO:0098793">
    <property type="term" value="C:presynapse"/>
    <property type="evidence" value="ECO:0007669"/>
    <property type="project" value="GOC"/>
</dbReference>
<dbReference type="GO" id="GO:0005524">
    <property type="term" value="F:ATP binding"/>
    <property type="evidence" value="ECO:0007669"/>
    <property type="project" value="UniProtKB-KW"/>
</dbReference>
<dbReference type="GO" id="GO:0016887">
    <property type="term" value="F:ATP hydrolysis activity"/>
    <property type="evidence" value="ECO:0000318"/>
    <property type="project" value="GO_Central"/>
</dbReference>
<dbReference type="GO" id="GO:0140662">
    <property type="term" value="F:ATP-dependent protein folding chaperone"/>
    <property type="evidence" value="ECO:0007669"/>
    <property type="project" value="InterPro"/>
</dbReference>
<dbReference type="GO" id="GO:0031072">
    <property type="term" value="F:heat shock protein binding"/>
    <property type="evidence" value="ECO:0000318"/>
    <property type="project" value="GO_Central"/>
</dbReference>
<dbReference type="GO" id="GO:0044183">
    <property type="term" value="F:protein folding chaperone"/>
    <property type="evidence" value="ECO:0000318"/>
    <property type="project" value="GO_Central"/>
</dbReference>
<dbReference type="GO" id="GO:0051087">
    <property type="term" value="F:protein-folding chaperone binding"/>
    <property type="evidence" value="ECO:0000314"/>
    <property type="project" value="FlyBase"/>
</dbReference>
<dbReference type="GO" id="GO:0007411">
    <property type="term" value="P:axon guidance"/>
    <property type="evidence" value="ECO:0000315"/>
    <property type="project" value="FlyBase"/>
</dbReference>
<dbReference type="GO" id="GO:0007413">
    <property type="term" value="P:axonal fasciculation"/>
    <property type="evidence" value="ECO:0000315"/>
    <property type="project" value="FlyBase"/>
</dbReference>
<dbReference type="GO" id="GO:0035967">
    <property type="term" value="P:cellular response to topologically incorrect protein"/>
    <property type="evidence" value="ECO:0000315"/>
    <property type="project" value="FlyBase"/>
</dbReference>
<dbReference type="GO" id="GO:0051085">
    <property type="term" value="P:chaperone cofactor-dependent protein refolding"/>
    <property type="evidence" value="ECO:0000318"/>
    <property type="project" value="GO_Central"/>
</dbReference>
<dbReference type="GO" id="GO:0061077">
    <property type="term" value="P:chaperone-mediated protein folding"/>
    <property type="evidence" value="ECO:0000314"/>
    <property type="project" value="FlyBase"/>
</dbReference>
<dbReference type="GO" id="GO:0030707">
    <property type="term" value="P:follicle cell of egg chamber development"/>
    <property type="evidence" value="ECO:0000315"/>
    <property type="project" value="FlyBase"/>
</dbReference>
<dbReference type="GO" id="GO:0061738">
    <property type="term" value="P:late endosomal microautophagy"/>
    <property type="evidence" value="ECO:0000315"/>
    <property type="project" value="FlyBase"/>
</dbReference>
<dbReference type="GO" id="GO:0097753">
    <property type="term" value="P:membrane bending"/>
    <property type="evidence" value="ECO:0000314"/>
    <property type="project" value="FlyBase"/>
</dbReference>
<dbReference type="GO" id="GO:0000398">
    <property type="term" value="P:mRNA splicing, via spliceosome"/>
    <property type="evidence" value="ECO:0000305"/>
    <property type="project" value="FlyBase"/>
</dbReference>
<dbReference type="GO" id="GO:0007399">
    <property type="term" value="P:nervous system development"/>
    <property type="evidence" value="ECO:0000315"/>
    <property type="project" value="FlyBase"/>
</dbReference>
<dbReference type="GO" id="GO:0007269">
    <property type="term" value="P:neurotransmitter secretion"/>
    <property type="evidence" value="ECO:0000315"/>
    <property type="project" value="FlyBase"/>
</dbReference>
<dbReference type="GO" id="GO:0042026">
    <property type="term" value="P:protein refolding"/>
    <property type="evidence" value="ECO:0000318"/>
    <property type="project" value="GO_Central"/>
</dbReference>
<dbReference type="GO" id="GO:0035194">
    <property type="term" value="P:regulatory ncRNA-mediated post-transcriptional gene silencing"/>
    <property type="evidence" value="ECO:0000315"/>
    <property type="project" value="FlyBase"/>
</dbReference>
<dbReference type="GO" id="GO:0070922">
    <property type="term" value="P:RISC complex assembly"/>
    <property type="evidence" value="ECO:0000316"/>
    <property type="project" value="FlyBase"/>
</dbReference>
<dbReference type="GO" id="GO:0016192">
    <property type="term" value="P:vesicle-mediated transport"/>
    <property type="evidence" value="ECO:0000315"/>
    <property type="project" value="FlyBase"/>
</dbReference>
<dbReference type="CDD" id="cd10233">
    <property type="entry name" value="ASKHA_NBD_HSP70_HSPA1"/>
    <property type="match status" value="1"/>
</dbReference>
<dbReference type="FunFam" id="2.60.34.10:FF:000002">
    <property type="entry name" value="Heat shock 70 kDa"/>
    <property type="match status" value="1"/>
</dbReference>
<dbReference type="FunFam" id="3.30.420.40:FF:000172">
    <property type="entry name" value="Heat shock 70 kDa protein"/>
    <property type="match status" value="2"/>
</dbReference>
<dbReference type="FunFam" id="3.30.30.30:FF:000001">
    <property type="entry name" value="heat shock 70 kDa protein-like"/>
    <property type="match status" value="1"/>
</dbReference>
<dbReference type="FunFam" id="3.90.640.10:FF:000134">
    <property type="entry name" value="Heat shock cognate 71 kDa protein"/>
    <property type="match status" value="1"/>
</dbReference>
<dbReference type="FunFam" id="1.20.1270.10:FF:000003">
    <property type="entry name" value="heat shock cognate 71 kDa protein-like"/>
    <property type="match status" value="1"/>
</dbReference>
<dbReference type="FunFam" id="3.30.420.40:FF:000026">
    <property type="entry name" value="Heat shock protein 70"/>
    <property type="match status" value="1"/>
</dbReference>
<dbReference type="Gene3D" id="1.20.1270.10">
    <property type="match status" value="1"/>
</dbReference>
<dbReference type="Gene3D" id="3.30.30.30">
    <property type="match status" value="1"/>
</dbReference>
<dbReference type="Gene3D" id="3.30.420.40">
    <property type="match status" value="2"/>
</dbReference>
<dbReference type="Gene3D" id="3.90.640.10">
    <property type="entry name" value="Actin, Chain A, domain 4"/>
    <property type="match status" value="1"/>
</dbReference>
<dbReference type="Gene3D" id="2.60.34.10">
    <property type="entry name" value="Substrate Binding Domain Of DNAk, Chain A, domain 1"/>
    <property type="match status" value="1"/>
</dbReference>
<dbReference type="InterPro" id="IPR043129">
    <property type="entry name" value="ATPase_NBD"/>
</dbReference>
<dbReference type="InterPro" id="IPR018181">
    <property type="entry name" value="Heat_shock_70_CS"/>
</dbReference>
<dbReference type="InterPro" id="IPR029048">
    <property type="entry name" value="HSP70_C_sf"/>
</dbReference>
<dbReference type="InterPro" id="IPR029047">
    <property type="entry name" value="HSP70_peptide-bd_sf"/>
</dbReference>
<dbReference type="InterPro" id="IPR013126">
    <property type="entry name" value="Hsp_70_fam"/>
</dbReference>
<dbReference type="NCBIfam" id="NF001413">
    <property type="entry name" value="PRK00290.1"/>
    <property type="match status" value="1"/>
</dbReference>
<dbReference type="PANTHER" id="PTHR19375">
    <property type="entry name" value="HEAT SHOCK PROTEIN 70KDA"/>
    <property type="match status" value="1"/>
</dbReference>
<dbReference type="Pfam" id="PF00012">
    <property type="entry name" value="HSP70"/>
    <property type="match status" value="1"/>
</dbReference>
<dbReference type="PRINTS" id="PR00301">
    <property type="entry name" value="HEATSHOCK70"/>
</dbReference>
<dbReference type="SUPFAM" id="SSF53067">
    <property type="entry name" value="Actin-like ATPase domain"/>
    <property type="match status" value="2"/>
</dbReference>
<dbReference type="SUPFAM" id="SSF100934">
    <property type="entry name" value="Heat shock protein 70kD (HSP70), C-terminal subdomain"/>
    <property type="match status" value="1"/>
</dbReference>
<dbReference type="SUPFAM" id="SSF100920">
    <property type="entry name" value="Heat shock protein 70kD (HSP70), peptide-binding domain"/>
    <property type="match status" value="1"/>
</dbReference>
<dbReference type="PROSITE" id="PS00297">
    <property type="entry name" value="HSP70_1"/>
    <property type="match status" value="1"/>
</dbReference>
<dbReference type="PROSITE" id="PS00329">
    <property type="entry name" value="HSP70_2"/>
    <property type="match status" value="1"/>
</dbReference>
<dbReference type="PROSITE" id="PS01036">
    <property type="entry name" value="HSP70_3"/>
    <property type="match status" value="1"/>
</dbReference>
<reference key="1">
    <citation type="journal article" date="1993" name="Gene">
        <title>Genomic structure and sequence analysis of Drosophila melanogaster HSC70 genes.</title>
        <authorList>
            <person name="Rubin D.M."/>
            <person name="Mehta A."/>
            <person name="Zhu J."/>
            <person name="Shoham S."/>
            <person name="Chen X.J."/>
            <person name="Wells Q."/>
            <person name="Palter K.B."/>
        </authorList>
    </citation>
    <scope>NUCLEOTIDE SEQUENCE [GENOMIC DNA]</scope>
    <source>
        <tissue>Embryo</tissue>
    </source>
</reference>
<reference key="2">
    <citation type="journal article" date="1990" name="Mol. Cell. Biol.">
        <title>Molecular and developmental characterization of the heat shock cognate 4 gene of Drosophila melanogaster.</title>
        <authorList>
            <person name="Perkins L.A."/>
            <person name="Doctor J.S."/>
            <person name="Zhang K."/>
            <person name="Stinson L."/>
            <person name="Perrimon N."/>
            <person name="Craig E.A."/>
        </authorList>
    </citation>
    <scope>NUCLEOTIDE SEQUENCE [GENOMIC DNA]</scope>
</reference>
<reference key="3">
    <citation type="journal article" date="2000" name="Science">
        <title>The genome sequence of Drosophila melanogaster.</title>
        <authorList>
            <person name="Adams M.D."/>
            <person name="Celniker S.E."/>
            <person name="Holt R.A."/>
            <person name="Evans C.A."/>
            <person name="Gocayne J.D."/>
            <person name="Amanatides P.G."/>
            <person name="Scherer S.E."/>
            <person name="Li P.W."/>
            <person name="Hoskins R.A."/>
            <person name="Galle R.F."/>
            <person name="George R.A."/>
            <person name="Lewis S.E."/>
            <person name="Richards S."/>
            <person name="Ashburner M."/>
            <person name="Henderson S.N."/>
            <person name="Sutton G.G."/>
            <person name="Wortman J.R."/>
            <person name="Yandell M.D."/>
            <person name="Zhang Q."/>
            <person name="Chen L.X."/>
            <person name="Brandon R.C."/>
            <person name="Rogers Y.-H.C."/>
            <person name="Blazej R.G."/>
            <person name="Champe M."/>
            <person name="Pfeiffer B.D."/>
            <person name="Wan K.H."/>
            <person name="Doyle C."/>
            <person name="Baxter E.G."/>
            <person name="Helt G."/>
            <person name="Nelson C.R."/>
            <person name="Miklos G.L.G."/>
            <person name="Abril J.F."/>
            <person name="Agbayani A."/>
            <person name="An H.-J."/>
            <person name="Andrews-Pfannkoch C."/>
            <person name="Baldwin D."/>
            <person name="Ballew R.M."/>
            <person name="Basu A."/>
            <person name="Baxendale J."/>
            <person name="Bayraktaroglu L."/>
            <person name="Beasley E.M."/>
            <person name="Beeson K.Y."/>
            <person name="Benos P.V."/>
            <person name="Berman B.P."/>
            <person name="Bhandari D."/>
            <person name="Bolshakov S."/>
            <person name="Borkova D."/>
            <person name="Botchan M.R."/>
            <person name="Bouck J."/>
            <person name="Brokstein P."/>
            <person name="Brottier P."/>
            <person name="Burtis K.C."/>
            <person name="Busam D.A."/>
            <person name="Butler H."/>
            <person name="Cadieu E."/>
            <person name="Center A."/>
            <person name="Chandra I."/>
            <person name="Cherry J.M."/>
            <person name="Cawley S."/>
            <person name="Dahlke C."/>
            <person name="Davenport L.B."/>
            <person name="Davies P."/>
            <person name="de Pablos B."/>
            <person name="Delcher A."/>
            <person name="Deng Z."/>
            <person name="Mays A.D."/>
            <person name="Dew I."/>
            <person name="Dietz S.M."/>
            <person name="Dodson K."/>
            <person name="Doup L.E."/>
            <person name="Downes M."/>
            <person name="Dugan-Rocha S."/>
            <person name="Dunkov B.C."/>
            <person name="Dunn P."/>
            <person name="Durbin K.J."/>
            <person name="Evangelista C.C."/>
            <person name="Ferraz C."/>
            <person name="Ferriera S."/>
            <person name="Fleischmann W."/>
            <person name="Fosler C."/>
            <person name="Gabrielian A.E."/>
            <person name="Garg N.S."/>
            <person name="Gelbart W.M."/>
            <person name="Glasser K."/>
            <person name="Glodek A."/>
            <person name="Gong F."/>
            <person name="Gorrell J.H."/>
            <person name="Gu Z."/>
            <person name="Guan P."/>
            <person name="Harris M."/>
            <person name="Harris N.L."/>
            <person name="Harvey D.A."/>
            <person name="Heiman T.J."/>
            <person name="Hernandez J.R."/>
            <person name="Houck J."/>
            <person name="Hostin D."/>
            <person name="Houston K.A."/>
            <person name="Howland T.J."/>
            <person name="Wei M.-H."/>
            <person name="Ibegwam C."/>
            <person name="Jalali M."/>
            <person name="Kalush F."/>
            <person name="Karpen G.H."/>
            <person name="Ke Z."/>
            <person name="Kennison J.A."/>
            <person name="Ketchum K.A."/>
            <person name="Kimmel B.E."/>
            <person name="Kodira C.D."/>
            <person name="Kraft C.L."/>
            <person name="Kravitz S."/>
            <person name="Kulp D."/>
            <person name="Lai Z."/>
            <person name="Lasko P."/>
            <person name="Lei Y."/>
            <person name="Levitsky A.A."/>
            <person name="Li J.H."/>
            <person name="Li Z."/>
            <person name="Liang Y."/>
            <person name="Lin X."/>
            <person name="Liu X."/>
            <person name="Mattei B."/>
            <person name="McIntosh T.C."/>
            <person name="McLeod M.P."/>
            <person name="McPherson D."/>
            <person name="Merkulov G."/>
            <person name="Milshina N.V."/>
            <person name="Mobarry C."/>
            <person name="Morris J."/>
            <person name="Moshrefi A."/>
            <person name="Mount S.M."/>
            <person name="Moy M."/>
            <person name="Murphy B."/>
            <person name="Murphy L."/>
            <person name="Muzny D.M."/>
            <person name="Nelson D.L."/>
            <person name="Nelson D.R."/>
            <person name="Nelson K.A."/>
            <person name="Nixon K."/>
            <person name="Nusskern D.R."/>
            <person name="Pacleb J.M."/>
            <person name="Palazzolo M."/>
            <person name="Pittman G.S."/>
            <person name="Pan S."/>
            <person name="Pollard J."/>
            <person name="Puri V."/>
            <person name="Reese M.G."/>
            <person name="Reinert K."/>
            <person name="Remington K."/>
            <person name="Saunders R.D.C."/>
            <person name="Scheeler F."/>
            <person name="Shen H."/>
            <person name="Shue B.C."/>
            <person name="Siden-Kiamos I."/>
            <person name="Simpson M."/>
            <person name="Skupski M.P."/>
            <person name="Smith T.J."/>
            <person name="Spier E."/>
            <person name="Spradling A.C."/>
            <person name="Stapleton M."/>
            <person name="Strong R."/>
            <person name="Sun E."/>
            <person name="Svirskas R."/>
            <person name="Tector C."/>
            <person name="Turner R."/>
            <person name="Venter E."/>
            <person name="Wang A.H."/>
            <person name="Wang X."/>
            <person name="Wang Z.-Y."/>
            <person name="Wassarman D.A."/>
            <person name="Weinstock G.M."/>
            <person name="Weissenbach J."/>
            <person name="Williams S.M."/>
            <person name="Woodage T."/>
            <person name="Worley K.C."/>
            <person name="Wu D."/>
            <person name="Yang S."/>
            <person name="Yao Q.A."/>
            <person name="Ye J."/>
            <person name="Yeh R.-F."/>
            <person name="Zaveri J.S."/>
            <person name="Zhan M."/>
            <person name="Zhang G."/>
            <person name="Zhao Q."/>
            <person name="Zheng L."/>
            <person name="Zheng X.H."/>
            <person name="Zhong F.N."/>
            <person name="Zhong W."/>
            <person name="Zhou X."/>
            <person name="Zhu S.C."/>
            <person name="Zhu X."/>
            <person name="Smith H.O."/>
            <person name="Gibbs R.A."/>
            <person name="Myers E.W."/>
            <person name="Rubin G.M."/>
            <person name="Venter J.C."/>
        </authorList>
    </citation>
    <scope>NUCLEOTIDE SEQUENCE [LARGE SCALE GENOMIC DNA]</scope>
    <source>
        <strain>Berkeley</strain>
    </source>
</reference>
<reference key="4">
    <citation type="journal article" date="2002" name="Genome Biol.">
        <title>Annotation of the Drosophila melanogaster euchromatic genome: a systematic review.</title>
        <authorList>
            <person name="Misra S."/>
            <person name="Crosby M.A."/>
            <person name="Mungall C.J."/>
            <person name="Matthews B.B."/>
            <person name="Campbell K.S."/>
            <person name="Hradecky P."/>
            <person name="Huang Y."/>
            <person name="Kaminker J.S."/>
            <person name="Millburn G.H."/>
            <person name="Prochnik S.E."/>
            <person name="Smith C.D."/>
            <person name="Tupy J.L."/>
            <person name="Whitfield E.J."/>
            <person name="Bayraktaroglu L."/>
            <person name="Berman B.P."/>
            <person name="Bettencourt B.R."/>
            <person name="Celniker S.E."/>
            <person name="de Grey A.D.N.J."/>
            <person name="Drysdale R.A."/>
            <person name="Harris N.L."/>
            <person name="Richter J."/>
            <person name="Russo S."/>
            <person name="Schroeder A.J."/>
            <person name="Shu S.Q."/>
            <person name="Stapleton M."/>
            <person name="Yamada C."/>
            <person name="Ashburner M."/>
            <person name="Gelbart W.M."/>
            <person name="Rubin G.M."/>
            <person name="Lewis S.E."/>
        </authorList>
    </citation>
    <scope>GENOME REANNOTATION</scope>
    <source>
        <strain>Berkeley</strain>
    </source>
</reference>
<reference key="5">
    <citation type="journal article" date="2002" name="Genome Biol.">
        <title>A Drosophila full-length cDNA resource.</title>
        <authorList>
            <person name="Stapleton M."/>
            <person name="Carlson J.W."/>
            <person name="Brokstein P."/>
            <person name="Yu C."/>
            <person name="Champe M."/>
            <person name="George R.A."/>
            <person name="Guarin H."/>
            <person name="Kronmiller B."/>
            <person name="Pacleb J.M."/>
            <person name="Park S."/>
            <person name="Wan K.H."/>
            <person name="Rubin G.M."/>
            <person name="Celniker S.E."/>
        </authorList>
    </citation>
    <scope>NUCLEOTIDE SEQUENCE [LARGE SCALE MRNA]</scope>
    <source>
        <strain>Berkeley</strain>
        <tissue>Head</tissue>
    </source>
</reference>
<reference key="6">
    <citation type="submission" date="2005-10" db="EMBL/GenBank/DDBJ databases">
        <authorList>
            <person name="Stapleton M."/>
            <person name="Carlson J.W."/>
            <person name="Chavez C."/>
            <person name="Frise E."/>
            <person name="George R.A."/>
            <person name="Pacleb J.M."/>
            <person name="Park S."/>
            <person name="Wan K.H."/>
            <person name="Yu C."/>
            <person name="Celniker S.E."/>
        </authorList>
    </citation>
    <scope>NUCLEOTIDE SEQUENCE [LARGE SCALE MRNA]</scope>
    <source>
        <strain>Berkeley</strain>
        <tissue>Larva</tissue>
        <tissue>Pupae</tissue>
    </source>
</reference>
<reference key="7">
    <citation type="journal article" date="1983" name="Dev. Biol.">
        <title>Expression of Drosophila heat-shock cognate genes during heat shock and development.</title>
        <authorList>
            <person name="Craig E.A."/>
            <person name="Ingolia T.D."/>
            <person name="Manseau L.J."/>
        </authorList>
    </citation>
    <scope>NUCLEOTIDE SEQUENCE [GENOMIC DNA] OF 1-104</scope>
</reference>
<reference key="8">
    <citation type="journal article" date="1993" name="Exp. Cell Res.">
        <title>Identification of Drosophila wing imaginal disc proteins by two-dimensional gel analysis and microsequencing.</title>
        <authorList>
            <person name="Santaren J.F."/>
            <person name="van Damme J."/>
            <person name="Puype M."/>
            <person name="Vandekerckhove J."/>
            <person name="Garcia-Bellido A."/>
        </authorList>
    </citation>
    <scope>PROTEIN SEQUENCE OF 580-592</scope>
    <source>
        <strain>Vallecas</strain>
        <tissue>Wing imaginal disk</tissue>
    </source>
</reference>
<reference key="9">
    <citation type="journal article" date="2007" name="Glycobiology">
        <title>Identification of N-glycosylated proteins from the central nervous system of Drosophila melanogaster.</title>
        <authorList>
            <person name="Koles K."/>
            <person name="Lim J.-M."/>
            <person name="Aoki K."/>
            <person name="Porterfield M."/>
            <person name="Tiemeyer M."/>
            <person name="Wells L."/>
            <person name="Panin V."/>
        </authorList>
    </citation>
    <scope>GLYCOSYLATION [LARGE SCALE ANALYSIS] AT ASN-35</scope>
    <scope>IDENTIFICATION BY MASS SPECTROMETRY</scope>
    <source>
        <strain>Oregon-R</strain>
        <tissue>Head</tissue>
    </source>
</reference>
<reference key="10">
    <citation type="journal article" date="2022" name="Nat. Cell Biol.">
        <title>Elongator stabilizes microtubules to control central spindle asymmetry and polarized trafficking of cell fate determinants.</title>
        <authorList>
            <person name="Planelles-Herrero V.J."/>
            <person name="Bittleston A."/>
            <person name="Seum C."/>
            <person name="Daeden A."/>
            <person name="Gaitan M.G."/>
            <person name="Derivery E."/>
        </authorList>
    </citation>
    <scope>DISRUPTION PHENOTYPE</scope>
    <scope>INTERACTION WITH THE ELONGATOR COMPLEX</scope>
</reference>
<proteinExistence type="evidence at protein level"/>
<name>HSP7D_DROME</name>
<protein>
    <recommendedName>
        <fullName>Heat shock 70 kDa protein cognate 4</fullName>
    </recommendedName>
    <alternativeName>
        <fullName>Heat shock 70 kDa protein 88E</fullName>
    </alternativeName>
</protein>
<sequence length="651" mass="71131">MSKAPAVGIDLGTTYSCVGVFQHGKVEIIANDQGNRTTPSYVAFTDTERLIGDAAKNQVAMNPTQTIFDAKRLIGRKFDDAAVQSDMKHWPFEVVSADGKPKIEVTYKDEKKTFFPEEISSMVLTKMKETAEAYLGKTVTNAVITVPAYFNDSQRQATKDAGTIAGLNVLRIINEPTAAAIAYGLDKKAVGERNVLIFDLGGGTFDVSILSIDDGIFEVKSTAGDTHLGGEDFDNRLVTHFVQEFKRKHKKDLTTNKRALRRLRTACERAKRTLSSSTQASIEIDSLFEGTDFYTSITRARFEELNADLFRSTMDPVEKALRDAKLDKSVIHDIVLVGGSTRIPKVQRLLQDLFNGKELNKSINPDEAVAYGAAVQAAILHGDKSQEVQDLLLLDVTPLSLGIETAGGVMSVLIKRNTTIPTKQTQTFTTYSDNQPGVLIQVYEGERAMTKDNNLLGKFELSGIPPAPRGVPQIEVTFDIDANGILNVTALERSTNKENKITITNDKGRLSKEDIERMVNEAEKYRNEDEKQKETIAAKNGLESYCFNMKATLDEDNLKTKISDSDRTTILDKCNETIKWLDANQLADKEEYEHRQKELEGVCNPIITKLYQGAGFPPGGMPGGPGGMPGAAGAAGAAGAGGAGPTIEEVD</sequence>
<gene>
    <name type="primary">Hsc70-4</name>
    <name type="synonym">Hsc4</name>
    <name type="ORF">CG4264</name>
</gene>
<feature type="chain" id="PRO_0000078340" description="Heat shock 70 kDa protein cognate 4">
    <location>
        <begin position="1"/>
        <end position="651"/>
    </location>
</feature>
<feature type="region of interest" description="Disordered" evidence="1">
    <location>
        <begin position="621"/>
        <end position="651"/>
    </location>
</feature>
<feature type="compositionally biased region" description="Gly residues" evidence="1">
    <location>
        <begin position="621"/>
        <end position="630"/>
    </location>
</feature>
<feature type="glycosylation site" description="N-linked (GlcNAc...) asparagine" evidence="2">
    <location>
        <position position="35"/>
    </location>
</feature>
<feature type="sequence conflict" description="In Ref. 2; AAA28627." evidence="4" ref="2">
    <original>L</original>
    <variation>P</variation>
    <location>
        <position position="167"/>
    </location>
</feature>
<feature type="sequence conflict" description="In Ref. 2; AAA28627." evidence="4" ref="2">
    <original>L</original>
    <variation>P</variation>
    <location>
        <position position="170"/>
    </location>
</feature>
<feature type="sequence conflict" description="In Ref. 5; AAL89931." evidence="4" ref="5">
    <original>K</original>
    <variation>Q</variation>
    <location>
        <position position="220"/>
    </location>
</feature>
<feature type="sequence conflict" description="In Ref. 5; AAL89931." evidence="4" ref="5">
    <original>N</original>
    <variation>S</variation>
    <location>
        <position position="360"/>
    </location>
</feature>
<feature type="sequence conflict" description="In Ref. 2; AAA28627." evidence="4" ref="2">
    <original>P</original>
    <variation>G</variation>
    <location>
        <position position="625"/>
    </location>
</feature>
<organism>
    <name type="scientific">Drosophila melanogaster</name>
    <name type="common">Fruit fly</name>
    <dbReference type="NCBI Taxonomy" id="7227"/>
    <lineage>
        <taxon>Eukaryota</taxon>
        <taxon>Metazoa</taxon>
        <taxon>Ecdysozoa</taxon>
        <taxon>Arthropoda</taxon>
        <taxon>Hexapoda</taxon>
        <taxon>Insecta</taxon>
        <taxon>Pterygota</taxon>
        <taxon>Neoptera</taxon>
        <taxon>Endopterygota</taxon>
        <taxon>Diptera</taxon>
        <taxon>Brachycera</taxon>
        <taxon>Muscomorpha</taxon>
        <taxon>Ephydroidea</taxon>
        <taxon>Drosophilidae</taxon>
        <taxon>Drosophila</taxon>
        <taxon>Sophophora</taxon>
    </lineage>
</organism>
<accession>P11147</accession>
<accession>Q3KN45</accession>
<accession>Q8SXQ4</accession>
<accession>Q9VFB0</accession>
<comment type="subunit">
    <text evidence="3">Associates with the elongator complex; this interaction is required for some functions of the elongator complex but is not required for regulation of microtubule dynamics.</text>
</comment>
<comment type="interaction">
    <interactant intactId="EBI-75181">
        <id>P11147</id>
    </interactant>
    <interactant intactId="EBI-74922">
        <id>O96757</id>
        <label>stumps</label>
    </interactant>
    <organismsDiffer>false</organismsDiffer>
    <experiments>3</experiments>
</comment>
<comment type="subcellular location">
    <subcellularLocation>
        <location>Cytoplasm</location>
        <location>Perinuclear region</location>
    </subcellularLocation>
    <subcellularLocation>
        <location>Nucleus</location>
    </subcellularLocation>
    <text>Localized to a meshwork of cytoplasmic fibers around the nucleus. Translocates to the nucleus after thermal stress.</text>
</comment>
<comment type="developmental stage">
    <text>Heat shock cognate proteins are expressed constitutively during normal development.</text>
</comment>
<comment type="disruption phenotype">
    <text evidence="3">RNAi-mediated knockdown is lethal in larval third instar (L3) stage.</text>
</comment>
<comment type="similarity">
    <text evidence="4">Belongs to the heat shock protein 70 family.</text>
</comment>
<evidence type="ECO:0000256" key="1">
    <source>
        <dbReference type="SAM" id="MobiDB-lite"/>
    </source>
</evidence>
<evidence type="ECO:0000269" key="2">
    <source>
    </source>
</evidence>
<evidence type="ECO:0000269" key="3">
    <source>
    </source>
</evidence>
<evidence type="ECO:0000305" key="4"/>